<organism>
    <name type="scientific">Cyprinus carpio</name>
    <name type="common">Common carp</name>
    <dbReference type="NCBI Taxonomy" id="7962"/>
    <lineage>
        <taxon>Eukaryota</taxon>
        <taxon>Metazoa</taxon>
        <taxon>Chordata</taxon>
        <taxon>Craniata</taxon>
        <taxon>Vertebrata</taxon>
        <taxon>Euteleostomi</taxon>
        <taxon>Actinopterygii</taxon>
        <taxon>Neopterygii</taxon>
        <taxon>Teleostei</taxon>
        <taxon>Ostariophysi</taxon>
        <taxon>Cypriniformes</taxon>
        <taxon>Cyprinidae</taxon>
        <taxon>Cyprininae</taxon>
        <taxon>Cyprinus</taxon>
    </lineage>
</organism>
<reference key="1">
    <citation type="journal article" date="1993" name="J. Biol. Chem.">
        <title>Isolation and primary structure of the three major forms of granulin-like peptides from hematopoietic tissues of a teleost fish (Cyprinus carpio).</title>
        <authorList>
            <person name="Belcourt D.R."/>
            <person name="Lazure C."/>
            <person name="Bennett H.P."/>
        </authorList>
    </citation>
    <scope>PROTEIN SEQUENCE</scope>
    <source>
        <tissue>Kidney</tissue>
    </source>
</reference>
<comment type="function">
    <text>Granulins have possible cytokine-like activity. They may play a role in inflammation, wound repair, and tissue remodeling.</text>
</comment>
<comment type="subcellular location">
    <subcellularLocation>
        <location>Secreted</location>
    </subcellularLocation>
</comment>
<comment type="tissue specificity">
    <text>Ubiquitous.</text>
</comment>
<comment type="PTM">
    <text>Granulins are disulfide bridged.</text>
</comment>
<comment type="similarity">
    <text evidence="2">Belongs to the granulin family.</text>
</comment>
<feature type="chain" id="PRO_0000150131" description="Granulin-2">
    <location>
        <begin position="1"/>
        <end position="57"/>
    </location>
</feature>
<feature type="disulfide bond" evidence="1">
    <location>
        <begin position="4"/>
        <end position="16"/>
    </location>
</feature>
<feature type="disulfide bond" evidence="1">
    <location>
        <begin position="10"/>
        <end position="26"/>
    </location>
</feature>
<sequence>VVYCNARTTCPSRTTCCRSPFGVWYCCPFLMGQCCRDGRHCCRHGYRCDSTSTLCLR</sequence>
<proteinExistence type="evidence at protein level"/>
<protein>
    <recommendedName>
        <fullName>Granulin-2</fullName>
    </recommendedName>
</protein>
<accession>P81014</accession>
<name>GRN2_CYPCA</name>
<dbReference type="PIR" id="B46654">
    <property type="entry name" value="B46654"/>
</dbReference>
<dbReference type="SMR" id="P81014"/>
<dbReference type="Proteomes" id="UP000694384">
    <property type="component" value="Unplaced"/>
</dbReference>
<dbReference type="Proteomes" id="UP000694427">
    <property type="component" value="Unplaced"/>
</dbReference>
<dbReference type="Proteomes" id="UP000694700">
    <property type="component" value="Unplaced"/>
</dbReference>
<dbReference type="Proteomes" id="UP000694701">
    <property type="component" value="Unplaced"/>
</dbReference>
<dbReference type="Proteomes" id="UP001155660">
    <property type="component" value="Unplaced"/>
</dbReference>
<dbReference type="GO" id="GO:0005615">
    <property type="term" value="C:extracellular space"/>
    <property type="evidence" value="ECO:0007669"/>
    <property type="project" value="UniProtKB-KW"/>
</dbReference>
<dbReference type="GO" id="GO:0005125">
    <property type="term" value="F:cytokine activity"/>
    <property type="evidence" value="ECO:0007669"/>
    <property type="project" value="UniProtKB-KW"/>
</dbReference>
<dbReference type="Gene3D" id="2.10.25.160">
    <property type="entry name" value="Granulin"/>
    <property type="match status" value="1"/>
</dbReference>
<dbReference type="InterPro" id="IPR000118">
    <property type="entry name" value="Granulin"/>
</dbReference>
<dbReference type="InterPro" id="IPR039036">
    <property type="entry name" value="Granulin_fam"/>
</dbReference>
<dbReference type="InterPro" id="IPR037277">
    <property type="entry name" value="Granulin_sf"/>
</dbReference>
<dbReference type="PANTHER" id="PTHR12274">
    <property type="entry name" value="GRANULIN"/>
    <property type="match status" value="1"/>
</dbReference>
<dbReference type="PANTHER" id="PTHR12274:SF3">
    <property type="entry name" value="PROGRANULIN"/>
    <property type="match status" value="1"/>
</dbReference>
<dbReference type="Pfam" id="PF00396">
    <property type="entry name" value="Granulin"/>
    <property type="match status" value="1"/>
</dbReference>
<dbReference type="SMART" id="SM00277">
    <property type="entry name" value="GRAN"/>
    <property type="match status" value="1"/>
</dbReference>
<dbReference type="SUPFAM" id="SSF57277">
    <property type="entry name" value="Granulin repeat"/>
    <property type="match status" value="1"/>
</dbReference>
<evidence type="ECO:0000250" key="1"/>
<evidence type="ECO:0000305" key="2"/>
<keyword id="KW-0202">Cytokine</keyword>
<keyword id="KW-0903">Direct protein sequencing</keyword>
<keyword id="KW-1015">Disulfide bond</keyword>
<keyword id="KW-1185">Reference proteome</keyword>
<keyword id="KW-0964">Secreted</keyword>